<comment type="function">
    <text evidence="1 8 10">G-protein coupled receptor that binds to several ligands including the tryptophan metabolite kynurenic acid (KYNA), lysophosphatidic acid (LPA) or 5-hydroxyindoleacetic acid (5-HIAA) with high affinity, leading to rapid and transient activation of numerous intracellular signaling pathways (PubMed:16754668, PubMed:20361937, PubMed:35148838). Plays a role in neutrophil recruitment to sites of inflammation and bacterial clearance through the major serotonin metabolite 5-HIAA that acts as a physiological ligand (PubMed:35148838). Stimulates lipid metabolism, thermogenic, and anti-inflammatory gene expression in adipose tissue once activated by kynurenic acid (By similarity). In macrophages, activation by lysophosphatidic acid promotes GPR35-induced signaling with a distinct transcriptional profile characterized by TNF production associated with ERK and NF-kappa-B activation. In turn, induces chemotaxis of macrophages (By similarity).</text>
</comment>
<comment type="subunit">
    <text evidence="9 11 12">Interacts with GNA13 (PubMed:36543774). Interacts with ARRB2 (PubMed:35101446, PubMed:37660910).</text>
</comment>
<comment type="subcellular location">
    <subcellularLocation>
        <location evidence="7 8 9">Cell membrane</location>
        <topology evidence="7">Multi-pass membrane protein</topology>
    </subcellularLocation>
    <text>Internalized to the cytoplasm after exposure to kynurenic acid.</text>
</comment>
<comment type="alternative products">
    <event type="alternative splicing"/>
    <isoform>
        <id>Q9HC97-1</id>
        <name>1</name>
        <sequence type="displayed"/>
    </isoform>
    <isoform>
        <id>Q9HC97-2</id>
        <name>2</name>
        <sequence type="described" ref="VSP_045871"/>
    </isoform>
</comment>
<comment type="tissue specificity">
    <text evidence="7">Predominantly expressed in immune and gastrointestinal tissues.</text>
</comment>
<comment type="PTM">
    <text evidence="9 12">Multiply phosphorylated in clusters of serines and threonines in the C-terminal tail (PubMed:35101446). Phosphorylation of Ser-300 and Ser-303 is mediated by GRK5 and/or GRK6 (PubMed:37660910).</text>
</comment>
<comment type="similarity">
    <text evidence="3">Belongs to the G-protein coupled receptor 1 family.</text>
</comment>
<evidence type="ECO:0000250" key="1">
    <source>
        <dbReference type="UniProtKB" id="Q9ES90"/>
    </source>
</evidence>
<evidence type="ECO:0000255" key="2"/>
<evidence type="ECO:0000255" key="3">
    <source>
        <dbReference type="PROSITE-ProRule" id="PRU00521"/>
    </source>
</evidence>
<evidence type="ECO:0000269" key="4">
    <source>
    </source>
</evidence>
<evidence type="ECO:0000269" key="5">
    <source>
    </source>
</evidence>
<evidence type="ECO:0000269" key="6">
    <source>
    </source>
</evidence>
<evidence type="ECO:0000269" key="7">
    <source>
    </source>
</evidence>
<evidence type="ECO:0000269" key="8">
    <source>
    </source>
</evidence>
<evidence type="ECO:0000269" key="9">
    <source>
    </source>
</evidence>
<evidence type="ECO:0000269" key="10">
    <source>
    </source>
</evidence>
<evidence type="ECO:0000269" key="11">
    <source>
    </source>
</evidence>
<evidence type="ECO:0000269" key="12">
    <source>
    </source>
</evidence>
<evidence type="ECO:0000269" key="13">
    <source>
    </source>
</evidence>
<evidence type="ECO:0000269" key="14">
    <source ref="5"/>
</evidence>
<evidence type="ECO:0000303" key="15">
    <source>
    </source>
</evidence>
<evidence type="ECO:0000305" key="16"/>
<evidence type="ECO:0007744" key="17">
    <source>
        <dbReference type="PDB" id="8H8J"/>
    </source>
</evidence>
<evidence type="ECO:0007829" key="18">
    <source>
        <dbReference type="PDB" id="8H8J"/>
    </source>
</evidence>
<feature type="chain" id="PRO_0000069563" description="G-protein coupled receptor 35">
    <location>
        <begin position="1"/>
        <end position="309"/>
    </location>
</feature>
<feature type="topological domain" description="Extracellular" evidence="2">
    <location>
        <begin position="1"/>
        <end position="24"/>
    </location>
</feature>
<feature type="transmembrane region" description="Helical; Name=1" evidence="2">
    <location>
        <begin position="25"/>
        <end position="45"/>
    </location>
</feature>
<feature type="topological domain" description="Cytoplasmic" evidence="2">
    <location>
        <begin position="46"/>
        <end position="56"/>
    </location>
</feature>
<feature type="transmembrane region" description="Helical; Name=2" evidence="2">
    <location>
        <begin position="57"/>
        <end position="77"/>
    </location>
</feature>
<feature type="topological domain" description="Extracellular" evidence="2">
    <location>
        <begin position="78"/>
        <end position="90"/>
    </location>
</feature>
<feature type="transmembrane region" description="Helical; Name=3" evidence="2">
    <location>
        <begin position="91"/>
        <end position="112"/>
    </location>
</feature>
<feature type="topological domain" description="Cytoplasmic" evidence="2">
    <location>
        <begin position="113"/>
        <end position="135"/>
    </location>
</feature>
<feature type="transmembrane region" description="Helical; Name=4" evidence="2">
    <location>
        <begin position="136"/>
        <end position="156"/>
    </location>
</feature>
<feature type="topological domain" description="Extracellular" evidence="2">
    <location>
        <begin position="157"/>
        <end position="174"/>
    </location>
</feature>
<feature type="transmembrane region" description="Helical; Name=5" evidence="2">
    <location>
        <begin position="175"/>
        <end position="195"/>
    </location>
</feature>
<feature type="topological domain" description="Cytoplasmic" evidence="2">
    <location>
        <begin position="196"/>
        <end position="218"/>
    </location>
</feature>
<feature type="transmembrane region" description="Helical; Name=6" evidence="2">
    <location>
        <begin position="219"/>
        <end position="239"/>
    </location>
</feature>
<feature type="topological domain" description="Extracellular" evidence="2">
    <location>
        <begin position="240"/>
        <end position="258"/>
    </location>
</feature>
<feature type="transmembrane region" description="Helical; Name=7" evidence="2">
    <location>
        <begin position="259"/>
        <end position="279"/>
    </location>
</feature>
<feature type="topological domain" description="Cytoplasmic" evidence="2">
    <location>
        <begin position="280"/>
        <end position="309"/>
    </location>
</feature>
<feature type="modified residue" description="Phosphoserine" evidence="9">
    <location>
        <position position="287"/>
    </location>
</feature>
<feature type="modified residue" description="Phosphoserine" evidence="9">
    <location>
        <position position="294"/>
    </location>
</feature>
<feature type="modified residue" description="Phosphoserine; by GRK5 and GRK6" evidence="9">
    <location>
        <position position="300"/>
    </location>
</feature>
<feature type="modified residue" description="Phosphoserine; by GRK5 and GRK6" evidence="9">
    <location>
        <position position="303"/>
    </location>
</feature>
<feature type="modified residue" description="Phosphothreonine" evidence="9">
    <location>
        <position position="307"/>
    </location>
</feature>
<feature type="glycosylation site" description="N-linked (GlcNAc...) asparagine" evidence="2">
    <location>
        <position position="2"/>
    </location>
</feature>
<feature type="disulfide bond" evidence="11 17">
    <location>
        <begin position="89"/>
        <end position="162"/>
    </location>
</feature>
<feature type="splice variant" id="VSP_045871" description="In isoform 2." evidence="15">
    <original>M</original>
    <variation>MLSGSRAVPTPHRGSEELLKYMLHSPCVSLTM</variation>
    <location>
        <position position="1"/>
    </location>
</feature>
<feature type="sequence variant" id="VAR_013601" description="In dbSNP:rs35146537." evidence="4">
    <original>A</original>
    <variation>T</variation>
    <location>
        <position position="25"/>
    </location>
</feature>
<feature type="sequence variant" id="VAR_013602" description="In dbSNP:rs139197368." evidence="4">
    <original>V</original>
    <variation>I</variation>
    <location>
        <position position="29"/>
    </location>
</feature>
<feature type="sequence variant" id="VAR_033467" description="In dbSNP:rs13387859.">
    <original>V</original>
    <variation>M</variation>
    <location>
        <position position="76"/>
    </location>
</feature>
<feature type="sequence variant" id="VAR_013603" description="In dbSNP:rs3749171." evidence="4">
    <original>T</original>
    <variation>M</variation>
    <location>
        <position position="108"/>
    </location>
</feature>
<feature type="sequence variant" id="VAR_013604" description="In dbSNP:rs34778053." evidence="4">
    <original>R</original>
    <variation>S</variation>
    <location>
        <position position="125"/>
    </location>
</feature>
<feature type="sequence variant" id="VAR_013605" description="In dbSNP:rs12468485." evidence="4">
    <original>T</original>
    <variation>M</variation>
    <location>
        <position position="253"/>
    </location>
</feature>
<feature type="sequence variant" id="VAR_013606" description="In dbSNP:rs3749172." evidence="5 6 13 14">
    <original>S</original>
    <variation>R</variation>
    <location>
        <position position="294"/>
    </location>
</feature>
<feature type="mutagenesis site" description="About 40% loss of ARRB2 recruitment." evidence="9">
    <original>S</original>
    <variation>A</variation>
    <location>
        <position position="287"/>
    </location>
</feature>
<feature type="mutagenesis site" description="About 50% loss of ARRB2 recruitment." evidence="9">
    <original>S</original>
    <variation>A</variation>
    <location>
        <position position="300"/>
    </location>
</feature>
<feature type="mutagenesis site" description="Almost complete loss of ARRB2 recruitment." evidence="9">
    <original>S</original>
    <variation>A</variation>
    <location>
        <position position="303"/>
    </location>
</feature>
<feature type="mutagenesis site" description="About 75% loss of ARRB2 recruitment." evidence="9">
    <original>T</original>
    <variation>A</variation>
    <location>
        <position position="307"/>
    </location>
</feature>
<feature type="sequence conflict" description="In Ref. 1; AAC52028." evidence="16" ref="1">
    <original>A</original>
    <variation>R</variation>
    <location>
        <position position="174"/>
    </location>
</feature>
<feature type="helix" evidence="18">
    <location>
        <begin position="17"/>
        <end position="44"/>
    </location>
</feature>
<feature type="turn" evidence="18">
    <location>
        <begin position="45"/>
        <end position="48"/>
    </location>
</feature>
<feature type="helix" evidence="18">
    <location>
        <begin position="54"/>
        <end position="78"/>
    </location>
</feature>
<feature type="turn" evidence="18">
    <location>
        <begin position="79"/>
        <end position="82"/>
    </location>
</feature>
<feature type="helix" evidence="18">
    <location>
        <begin position="87"/>
        <end position="118"/>
    </location>
</feature>
<feature type="helix" evidence="18">
    <location>
        <begin position="122"/>
        <end position="124"/>
    </location>
</feature>
<feature type="turn" evidence="18">
    <location>
        <begin position="125"/>
        <end position="127"/>
    </location>
</feature>
<feature type="helix" evidence="18">
    <location>
        <begin position="130"/>
        <end position="157"/>
    </location>
</feature>
<feature type="turn" evidence="18">
    <location>
        <begin position="170"/>
        <end position="172"/>
    </location>
</feature>
<feature type="helix" evidence="18">
    <location>
        <begin position="174"/>
        <end position="178"/>
    </location>
</feature>
<feature type="helix" evidence="18">
    <location>
        <begin position="181"/>
        <end position="197"/>
    </location>
</feature>
<feature type="helix" evidence="18">
    <location>
        <begin position="206"/>
        <end position="240"/>
    </location>
</feature>
<feature type="helix" evidence="18">
    <location>
        <begin position="250"/>
        <end position="266"/>
    </location>
</feature>
<feature type="helix" evidence="18">
    <location>
        <begin position="268"/>
        <end position="271"/>
    </location>
</feature>
<feature type="turn" evidence="18">
    <location>
        <begin position="272"/>
        <end position="277"/>
    </location>
</feature>
<feature type="strand" evidence="18">
    <location>
        <begin position="278"/>
        <end position="280"/>
    </location>
</feature>
<feature type="helix" evidence="18">
    <location>
        <begin position="281"/>
        <end position="287"/>
    </location>
</feature>
<feature type="sequence conflict" description="In Ref. 4; AK172786." evidence="16" ref="4">
    <original>R</original>
    <variation>H</variation>
    <location sequence="Q9HC97-2">
        <position position="13"/>
    </location>
</feature>
<accession>Q9HC97</accession>
<accession>J3KR30</accession>
<accession>O43495</accession>
<accession>Q17R58</accession>
<accession>Q4VBN5</accession>
<accession>Q4ZFV2</accession>
<accession>Q6FHI8</accession>
<accession>Q86UH4</accession>
<sequence>MNGTYNTCGSSDLTWPPAIKLGFYAYLGVLLVLGLLLNSLALWVFCCRMQQWTETRIYMTNLAVADLCLLCTLPFVLHSLRDTSDTPLCQLSQGIYLTNRYMSISLVTAIAVDRYVAVRHPLRARGLRSPRQAAAVCAVLWVLVIGSLVARWLLGIQEGGFCFRSTRHNFNSMAFPLLGFYLPLAVVVFCSLKVVTALAQRPPTDVGQAEATRKAARMVWANLLVFVVCFLPLHVGLTVRLAVGWNACALLETIRRALYITSKLSDANCCLDAICYYYMAKEFQEASALAVAPSAKAHKSQDSLCVTLA</sequence>
<reference key="1">
    <citation type="journal article" date="1998" name="Genomics">
        <title>Discovery of three novel G-protein-coupled receptor genes.</title>
        <authorList>
            <person name="O'Dowd B.F."/>
            <person name="Nguyen T."/>
            <person name="Marchese A."/>
            <person name="Cheng R."/>
            <person name="Lynch K.R."/>
            <person name="Heng H.H.Q."/>
            <person name="Kolakowski L.F. Jr."/>
            <person name="George S.R."/>
        </authorList>
    </citation>
    <scope>NUCLEOTIDE SEQUENCE [GENOMIC DNA]</scope>
    <scope>VARIANT ARG-294</scope>
</reference>
<reference key="2">
    <citation type="journal article" date="2000" name="Nat. Genet.">
        <title>Genetic variation in the gene encoding calpain-10 is associated with type 2 diabetes mellitus.</title>
        <authorList>
            <person name="Horikawa Y."/>
            <person name="Oda N."/>
            <person name="Cox N.J."/>
            <person name="Li X."/>
            <person name="Orho-Melander M."/>
            <person name="Hara M."/>
            <person name="Hinokio Y."/>
            <person name="Lindner T.H."/>
            <person name="Mashima H."/>
            <person name="Schwarz P.E.H."/>
            <person name="del Bosque-Plata L."/>
            <person name="Horikawa Y."/>
            <person name="Oda Y."/>
            <person name="Yoshiuchi I."/>
            <person name="Colilla S."/>
            <person name="Polonsky K.S."/>
            <person name="Wei S."/>
            <person name="Concannon P."/>
            <person name="Iwasaki N."/>
            <person name="Schulze J."/>
            <person name="Baier L.J."/>
            <person name="Bogardus C."/>
            <person name="Groop L."/>
            <person name="Boerwinkle E."/>
            <person name="Hanis C.L."/>
            <person name="Bell G.I."/>
        </authorList>
    </citation>
    <scope>NUCLEOTIDE SEQUENCE [MRNA] (ISOFORM 1)</scope>
    <scope>VARIANTS THR-25; ILE-29; MET-108; SER-125 AND MET-253</scope>
</reference>
<reference key="3">
    <citation type="submission" date="2003-04" db="EMBL/GenBank/DDBJ databases">
        <title>Isolation of complete coding sequence for G-protein coupled receptor 35 (GPR35).</title>
        <authorList>
            <person name="Warren C.N."/>
            <person name="Aronstam R.S."/>
            <person name="Sharma S.V."/>
        </authorList>
    </citation>
    <scope>NUCLEOTIDE SEQUENCE [GENOMIC DNA]</scope>
</reference>
<reference key="4">
    <citation type="journal article" date="2004" name="Nat. Genet.">
        <title>Complete sequencing and characterization of 21,243 full-length human cDNAs.</title>
        <authorList>
            <person name="Ota T."/>
            <person name="Suzuki Y."/>
            <person name="Nishikawa T."/>
            <person name="Otsuki T."/>
            <person name="Sugiyama T."/>
            <person name="Irie R."/>
            <person name="Wakamatsu A."/>
            <person name="Hayashi K."/>
            <person name="Sato H."/>
            <person name="Nagai K."/>
            <person name="Kimura K."/>
            <person name="Makita H."/>
            <person name="Sekine M."/>
            <person name="Obayashi M."/>
            <person name="Nishi T."/>
            <person name="Shibahara T."/>
            <person name="Tanaka T."/>
            <person name="Ishii S."/>
            <person name="Yamamoto J."/>
            <person name="Saito K."/>
            <person name="Kawai Y."/>
            <person name="Isono Y."/>
            <person name="Nakamura Y."/>
            <person name="Nagahari K."/>
            <person name="Murakami K."/>
            <person name="Yasuda T."/>
            <person name="Iwayanagi T."/>
            <person name="Wagatsuma M."/>
            <person name="Shiratori A."/>
            <person name="Sudo H."/>
            <person name="Hosoiri T."/>
            <person name="Kaku Y."/>
            <person name="Kodaira H."/>
            <person name="Kondo H."/>
            <person name="Sugawara M."/>
            <person name="Takahashi M."/>
            <person name="Kanda K."/>
            <person name="Yokoi T."/>
            <person name="Furuya T."/>
            <person name="Kikkawa E."/>
            <person name="Omura Y."/>
            <person name="Abe K."/>
            <person name="Kamihara K."/>
            <person name="Katsuta N."/>
            <person name="Sato K."/>
            <person name="Tanikawa M."/>
            <person name="Yamazaki M."/>
            <person name="Ninomiya K."/>
            <person name="Ishibashi T."/>
            <person name="Yamashita H."/>
            <person name="Murakawa K."/>
            <person name="Fujimori K."/>
            <person name="Tanai H."/>
            <person name="Kimata M."/>
            <person name="Watanabe M."/>
            <person name="Hiraoka S."/>
            <person name="Chiba Y."/>
            <person name="Ishida S."/>
            <person name="Ono Y."/>
            <person name="Takiguchi S."/>
            <person name="Watanabe S."/>
            <person name="Yosida M."/>
            <person name="Hotuta T."/>
            <person name="Kusano J."/>
            <person name="Kanehori K."/>
            <person name="Takahashi-Fujii A."/>
            <person name="Hara H."/>
            <person name="Tanase T.-O."/>
            <person name="Nomura Y."/>
            <person name="Togiya S."/>
            <person name="Komai F."/>
            <person name="Hara R."/>
            <person name="Takeuchi K."/>
            <person name="Arita M."/>
            <person name="Imose N."/>
            <person name="Musashino K."/>
            <person name="Yuuki H."/>
            <person name="Oshima A."/>
            <person name="Sasaki N."/>
            <person name="Aotsuka S."/>
            <person name="Yoshikawa Y."/>
            <person name="Matsunawa H."/>
            <person name="Ichihara T."/>
            <person name="Shiohata N."/>
            <person name="Sano S."/>
            <person name="Moriya S."/>
            <person name="Momiyama H."/>
            <person name="Satoh N."/>
            <person name="Takami S."/>
            <person name="Terashima Y."/>
            <person name="Suzuki O."/>
            <person name="Nakagawa S."/>
            <person name="Senoh A."/>
            <person name="Mizoguchi H."/>
            <person name="Goto Y."/>
            <person name="Shimizu F."/>
            <person name="Wakebe H."/>
            <person name="Hishigaki H."/>
            <person name="Watanabe T."/>
            <person name="Sugiyama A."/>
            <person name="Takemoto M."/>
            <person name="Kawakami B."/>
            <person name="Yamazaki M."/>
            <person name="Watanabe K."/>
            <person name="Kumagai A."/>
            <person name="Itakura S."/>
            <person name="Fukuzumi Y."/>
            <person name="Fujimori Y."/>
            <person name="Komiyama M."/>
            <person name="Tashiro H."/>
            <person name="Tanigami A."/>
            <person name="Fujiwara T."/>
            <person name="Ono T."/>
            <person name="Yamada K."/>
            <person name="Fujii Y."/>
            <person name="Ozaki K."/>
            <person name="Hirao M."/>
            <person name="Ohmori Y."/>
            <person name="Kawabata A."/>
            <person name="Hikiji T."/>
            <person name="Kobatake N."/>
            <person name="Inagaki H."/>
            <person name="Ikema Y."/>
            <person name="Okamoto S."/>
            <person name="Okitani R."/>
            <person name="Kawakami T."/>
            <person name="Noguchi S."/>
            <person name="Itoh T."/>
            <person name="Shigeta K."/>
            <person name="Senba T."/>
            <person name="Matsumura K."/>
            <person name="Nakajima Y."/>
            <person name="Mizuno T."/>
            <person name="Morinaga M."/>
            <person name="Sasaki M."/>
            <person name="Togashi T."/>
            <person name="Oyama M."/>
            <person name="Hata H."/>
            <person name="Watanabe M."/>
            <person name="Komatsu T."/>
            <person name="Mizushima-Sugano J."/>
            <person name="Satoh T."/>
            <person name="Shirai Y."/>
            <person name="Takahashi Y."/>
            <person name="Nakagawa K."/>
            <person name="Okumura K."/>
            <person name="Nagase T."/>
            <person name="Nomura N."/>
            <person name="Kikuchi H."/>
            <person name="Masuho Y."/>
            <person name="Yamashita R."/>
            <person name="Nakai K."/>
            <person name="Yada T."/>
            <person name="Nakamura Y."/>
            <person name="Ohara O."/>
            <person name="Isogai T."/>
            <person name="Sugano S."/>
        </authorList>
    </citation>
    <scope>NUCLEOTIDE SEQUENCE [LARGE SCALE MRNA] (ISOFORM 2)</scope>
    <scope>VARIANT ARG-294</scope>
    <source>
        <tissue>Hepatoma</tissue>
    </source>
</reference>
<reference key="5">
    <citation type="submission" date="2004-06" db="EMBL/GenBank/DDBJ databases">
        <title>Cloning of human full open reading frames in Gateway(TM) system entry vector (pDONR201).</title>
        <authorList>
            <person name="Ebert L."/>
            <person name="Schick M."/>
            <person name="Neubert P."/>
            <person name="Schatten R."/>
            <person name="Henze S."/>
            <person name="Korn B."/>
        </authorList>
    </citation>
    <scope>NUCLEOTIDE SEQUENCE [LARGE SCALE MRNA] (ISOFORM 1)</scope>
    <scope>VARIANT ARG-294</scope>
</reference>
<reference key="6">
    <citation type="journal article" date="2005" name="Nature">
        <title>Generation and annotation of the DNA sequences of human chromosomes 2 and 4.</title>
        <authorList>
            <person name="Hillier L.W."/>
            <person name="Graves T.A."/>
            <person name="Fulton R.S."/>
            <person name="Fulton L.A."/>
            <person name="Pepin K.H."/>
            <person name="Minx P."/>
            <person name="Wagner-McPherson C."/>
            <person name="Layman D."/>
            <person name="Wylie K."/>
            <person name="Sekhon M."/>
            <person name="Becker M.C."/>
            <person name="Fewell G.A."/>
            <person name="Delehaunty K.D."/>
            <person name="Miner T.L."/>
            <person name="Nash W.E."/>
            <person name="Kremitzki C."/>
            <person name="Oddy L."/>
            <person name="Du H."/>
            <person name="Sun H."/>
            <person name="Bradshaw-Cordum H."/>
            <person name="Ali J."/>
            <person name="Carter J."/>
            <person name="Cordes M."/>
            <person name="Harris A."/>
            <person name="Isak A."/>
            <person name="van Brunt A."/>
            <person name="Nguyen C."/>
            <person name="Du F."/>
            <person name="Courtney L."/>
            <person name="Kalicki J."/>
            <person name="Ozersky P."/>
            <person name="Abbott S."/>
            <person name="Armstrong J."/>
            <person name="Belter E.A."/>
            <person name="Caruso L."/>
            <person name="Cedroni M."/>
            <person name="Cotton M."/>
            <person name="Davidson T."/>
            <person name="Desai A."/>
            <person name="Elliott G."/>
            <person name="Erb T."/>
            <person name="Fronick C."/>
            <person name="Gaige T."/>
            <person name="Haakenson W."/>
            <person name="Haglund K."/>
            <person name="Holmes A."/>
            <person name="Harkins R."/>
            <person name="Kim K."/>
            <person name="Kruchowski S.S."/>
            <person name="Strong C.M."/>
            <person name="Grewal N."/>
            <person name="Goyea E."/>
            <person name="Hou S."/>
            <person name="Levy A."/>
            <person name="Martinka S."/>
            <person name="Mead K."/>
            <person name="McLellan M.D."/>
            <person name="Meyer R."/>
            <person name="Randall-Maher J."/>
            <person name="Tomlinson C."/>
            <person name="Dauphin-Kohlberg S."/>
            <person name="Kozlowicz-Reilly A."/>
            <person name="Shah N."/>
            <person name="Swearengen-Shahid S."/>
            <person name="Snider J."/>
            <person name="Strong J.T."/>
            <person name="Thompson J."/>
            <person name="Yoakum M."/>
            <person name="Leonard S."/>
            <person name="Pearman C."/>
            <person name="Trani L."/>
            <person name="Radionenko M."/>
            <person name="Waligorski J.E."/>
            <person name="Wang C."/>
            <person name="Rock S.M."/>
            <person name="Tin-Wollam A.-M."/>
            <person name="Maupin R."/>
            <person name="Latreille P."/>
            <person name="Wendl M.C."/>
            <person name="Yang S.-P."/>
            <person name="Pohl C."/>
            <person name="Wallis J.W."/>
            <person name="Spieth J."/>
            <person name="Bieri T.A."/>
            <person name="Berkowicz N."/>
            <person name="Nelson J.O."/>
            <person name="Osborne J."/>
            <person name="Ding L."/>
            <person name="Meyer R."/>
            <person name="Sabo A."/>
            <person name="Shotland Y."/>
            <person name="Sinha P."/>
            <person name="Wohldmann P.E."/>
            <person name="Cook L.L."/>
            <person name="Hickenbotham M.T."/>
            <person name="Eldred J."/>
            <person name="Williams D."/>
            <person name="Jones T.A."/>
            <person name="She X."/>
            <person name="Ciccarelli F.D."/>
            <person name="Izaurralde E."/>
            <person name="Taylor J."/>
            <person name="Schmutz J."/>
            <person name="Myers R.M."/>
            <person name="Cox D.R."/>
            <person name="Huang X."/>
            <person name="McPherson J.D."/>
            <person name="Mardis E.R."/>
            <person name="Clifton S.W."/>
            <person name="Warren W.C."/>
            <person name="Chinwalla A.T."/>
            <person name="Eddy S.R."/>
            <person name="Marra M.A."/>
            <person name="Ovcharenko I."/>
            <person name="Furey T.S."/>
            <person name="Miller W."/>
            <person name="Eichler E.E."/>
            <person name="Bork P."/>
            <person name="Suyama M."/>
            <person name="Torrents D."/>
            <person name="Waterston R.H."/>
            <person name="Wilson R.K."/>
        </authorList>
    </citation>
    <scope>NUCLEOTIDE SEQUENCE [LARGE SCALE GENOMIC DNA]</scope>
</reference>
<reference key="7">
    <citation type="journal article" date="2004" name="Genome Res.">
        <title>The status, quality, and expansion of the NIH full-length cDNA project: the Mammalian Gene Collection (MGC).</title>
        <authorList>
            <consortium name="The MGC Project Team"/>
        </authorList>
    </citation>
    <scope>NUCLEOTIDE SEQUENCE [LARGE SCALE MRNA] (ISOFORM 1)</scope>
    <scope>VARIANT ARG-294</scope>
    <source>
        <tissue>Brain</tissue>
    </source>
</reference>
<reference key="8">
    <citation type="journal article" date="2006" name="J. Biol. Chem.">
        <title>Kynurenic acid as a ligand for orphan G protein-coupled receptor GPR35.</title>
        <authorList>
            <person name="Wang J."/>
            <person name="Simonavicius N."/>
            <person name="Wu X."/>
            <person name="Swaminath G."/>
            <person name="Reagan J."/>
            <person name="Tian H."/>
            <person name="Ling L."/>
        </authorList>
    </citation>
    <scope>FUNCTION</scope>
    <scope>SUBCELLULAR LOCATION</scope>
    <scope>TISSUE SPECIFICITY</scope>
</reference>
<reference key="9">
    <citation type="journal article" date="2010" name="Biochem. Biophys. Res. Commun.">
        <title>GPR35 is a novel lysophosphatidic acid receptor.</title>
        <authorList>
            <person name="Oka S."/>
            <person name="Ota R."/>
            <person name="Shima M."/>
            <person name="Yamashita A."/>
            <person name="Sugiura T."/>
        </authorList>
    </citation>
    <scope>FUNCTION</scope>
    <scope>SUBCELLULAR LOCATION</scope>
</reference>
<reference key="10">
    <citation type="journal article" date="2022" name="Cell">
        <title>GPR35 promotes neutrophil recruitment in response to serotonin metabolite 5-HIAA.</title>
        <authorList>
            <person name="De Giovanni M."/>
            <person name="Tam H."/>
            <person name="Valet C."/>
            <person name="Xu Y."/>
            <person name="Looney M.R."/>
            <person name="Cyster J.G."/>
        </authorList>
    </citation>
    <scope>FUNCTION</scope>
</reference>
<reference key="11">
    <citation type="journal article" date="2022" name="J. Biol. Chem.">
        <title>Agonist-induced phosphorylation of orthologues of the orphan receptor GPR35 functions as an activation sensor.</title>
        <authorList>
            <person name="Divorty N."/>
            <person name="Jenkins L."/>
            <person name="Ganguly A."/>
            <person name="Butcher A.J."/>
            <person name="Hudson B.D."/>
            <person name="Schulz S."/>
            <person name="Tobin A.B."/>
            <person name="Nicklin S.A."/>
            <person name="Milligan G."/>
        </authorList>
    </citation>
    <scope>FUNCTION</scope>
    <scope>MUTAGENESIS OF SER-287; SER-300; SER-303 AND THR-307</scope>
    <scope>PHOSPHORYLATION AT SER-287; SER-294; SER-300; SER-303 AND THR-307</scope>
    <scope>SUBCELLULAR LOCATION</scope>
    <scope>INTERACTION WITH ARRB2</scope>
</reference>
<reference key="12">
    <citation type="journal article" date="2023" name="J. Biol. Chem.">
        <title>G protein-receptor kinases 5/6 are the key regulators of G protein-coupled receptor 35-arrestin interactions.</title>
        <authorList>
            <person name="Ganguly A."/>
            <person name="Quon T."/>
            <person name="Jenkins L."/>
            <person name="Joseph B."/>
            <person name="Al-Awar R."/>
            <person name="Chevigne A."/>
            <person name="Tobin A.B."/>
            <person name="Uehling D.E."/>
            <person name="Hoffmann C."/>
            <person name="Drube J."/>
            <person name="Milligan G."/>
        </authorList>
    </citation>
    <scope>FUNCTION</scope>
    <scope>PHOSPHORYLATION AT SER-300 AND SER-303</scope>
    <scope>INTERACTION WITH ARRB2</scope>
</reference>
<reference evidence="17" key="13">
    <citation type="journal article" date="2022" name="Cell Discov.">
        <title>Insights into divalent cation regulation and G13-coupling of orphan receptor GPR35.</title>
        <authorList>
            <person name="Duan J."/>
            <person name="Liu Q."/>
            <person name="Yuan Q."/>
            <person name="Ji Y."/>
            <person name="Zhu S."/>
            <person name="Tan Y."/>
            <person name="He X."/>
            <person name="Xu Y."/>
            <person name="Shi J."/>
            <person name="Cheng X."/>
            <person name="Jiang H."/>
            <person name="Eric Xu H."/>
            <person name="Jiang Y."/>
        </authorList>
    </citation>
    <scope>STRUCTURE BY ELECTRON MICROSCOPY (3.20 ANGSTROMS) OF 2-309</scope>
    <scope>DISULFIDE BONDS</scope>
    <scope>INTERACTION WITH GNA13</scope>
</reference>
<protein>
    <recommendedName>
        <fullName>G-protein coupled receptor 35</fullName>
    </recommendedName>
    <alternativeName>
        <fullName>Kynurenic acid receptor</fullName>
        <shortName>KYNA receptor</shortName>
    </alternativeName>
</protein>
<proteinExistence type="evidence at protein level"/>
<dbReference type="EMBL" id="AF027957">
    <property type="protein sequence ID" value="AAC52028.1"/>
    <property type="molecule type" value="Genomic_DNA"/>
</dbReference>
<dbReference type="EMBL" id="AF089087">
    <property type="protein sequence ID" value="AAG17965.1"/>
    <property type="molecule type" value="mRNA"/>
</dbReference>
<dbReference type="EMBL" id="AY275467">
    <property type="protein sequence ID" value="AAP32299.1"/>
    <property type="molecule type" value="Genomic_DNA"/>
</dbReference>
<dbReference type="EMBL" id="AK172786">
    <property type="status" value="NOT_ANNOTATED_CDS"/>
    <property type="molecule type" value="mRNA"/>
</dbReference>
<dbReference type="EMBL" id="CR541765">
    <property type="protein sequence ID" value="CAG46564.1"/>
    <property type="molecule type" value="mRNA"/>
</dbReference>
<dbReference type="EMBL" id="AC124862">
    <property type="protein sequence ID" value="AAX88945.1"/>
    <property type="molecule type" value="Genomic_DNA"/>
</dbReference>
<dbReference type="EMBL" id="BC095500">
    <property type="protein sequence ID" value="AAH95500.1"/>
    <property type="molecule type" value="mRNA"/>
</dbReference>
<dbReference type="EMBL" id="BC117453">
    <property type="protein sequence ID" value="AAI17454.2"/>
    <property type="molecule type" value="mRNA"/>
</dbReference>
<dbReference type="EMBL" id="BC117455">
    <property type="protein sequence ID" value="AAI17456.2"/>
    <property type="molecule type" value="mRNA"/>
</dbReference>
<dbReference type="CCDS" id="CCDS2541.1">
    <molecule id="Q9HC97-1"/>
</dbReference>
<dbReference type="CCDS" id="CCDS56174.1">
    <molecule id="Q9HC97-2"/>
</dbReference>
<dbReference type="RefSeq" id="NP_001182310.1">
    <molecule id="Q9HC97-2"/>
    <property type="nucleotide sequence ID" value="NM_001195381.3"/>
</dbReference>
<dbReference type="RefSeq" id="NP_001182311.1">
    <molecule id="Q9HC97-2"/>
    <property type="nucleotide sequence ID" value="NM_001195382.3"/>
</dbReference>
<dbReference type="RefSeq" id="NP_001381659.1">
    <molecule id="Q9HC97-2"/>
    <property type="nucleotide sequence ID" value="NM_001394730.1"/>
</dbReference>
<dbReference type="RefSeq" id="NP_005292.2">
    <molecule id="Q9HC97-1"/>
    <property type="nucleotide sequence ID" value="NM_005301.3"/>
</dbReference>
<dbReference type="PDB" id="8H8J">
    <property type="method" value="EM"/>
    <property type="resolution" value="3.20 A"/>
    <property type="chains" value="C=2-309"/>
</dbReference>
<dbReference type="PDBsum" id="8H8J"/>
<dbReference type="EMDB" id="EMD-34549"/>
<dbReference type="SMR" id="Q9HC97"/>
<dbReference type="BioGRID" id="109117">
    <property type="interactions" value="146"/>
</dbReference>
<dbReference type="FunCoup" id="Q9HC97">
    <property type="interactions" value="899"/>
</dbReference>
<dbReference type="IntAct" id="Q9HC97">
    <property type="interactions" value="128"/>
</dbReference>
<dbReference type="MINT" id="Q9HC97"/>
<dbReference type="STRING" id="9606.ENSP00000411788"/>
<dbReference type="BindingDB" id="Q9HC97"/>
<dbReference type="ChEMBL" id="CHEMBL1293267"/>
<dbReference type="DrugBank" id="DB00695">
    <property type="generic name" value="Furosemide"/>
</dbReference>
<dbReference type="DrugBank" id="DB11937">
    <property type="generic name" value="Kynurenic Acid"/>
</dbReference>
<dbReference type="DrugBank" id="DB11156">
    <property type="generic name" value="Pyrantel"/>
</dbReference>
<dbReference type="DrugCentral" id="Q9HC97"/>
<dbReference type="GuidetoPHARMACOLOGY" id="102"/>
<dbReference type="TCDB" id="9.A.14.13.8">
    <property type="family name" value="the g-protein-coupled receptor (gpcr) family"/>
</dbReference>
<dbReference type="GlyCosmos" id="Q9HC97">
    <property type="glycosylation" value="1 site, No reported glycans"/>
</dbReference>
<dbReference type="GlyGen" id="Q9HC97">
    <property type="glycosylation" value="2 sites, 1 O-linked glycan (1 site)"/>
</dbReference>
<dbReference type="iPTMnet" id="Q9HC97"/>
<dbReference type="PhosphoSitePlus" id="Q9HC97"/>
<dbReference type="BioMuta" id="GPR35"/>
<dbReference type="DMDM" id="68068087"/>
<dbReference type="jPOST" id="Q9HC97"/>
<dbReference type="MassIVE" id="Q9HC97"/>
<dbReference type="PaxDb" id="9606-ENSP00000411788"/>
<dbReference type="PeptideAtlas" id="Q9HC97"/>
<dbReference type="Antibodypedia" id="34526">
    <property type="antibodies" value="229 antibodies from 30 providers"/>
</dbReference>
<dbReference type="DNASU" id="2859"/>
<dbReference type="Ensembl" id="ENST00000319838.10">
    <molecule id="Q9HC97-1"/>
    <property type="protein sequence ID" value="ENSP00000322731.5"/>
    <property type="gene ID" value="ENSG00000178623.13"/>
</dbReference>
<dbReference type="Ensembl" id="ENST00000403859.1">
    <molecule id="Q9HC97-1"/>
    <property type="protein sequence ID" value="ENSP00000385140.1"/>
    <property type="gene ID" value="ENSG00000178623.13"/>
</dbReference>
<dbReference type="Ensembl" id="ENST00000407714.2">
    <molecule id="Q9HC97-1"/>
    <property type="protein sequence ID" value="ENSP00000384263.1"/>
    <property type="gene ID" value="ENSG00000178623.13"/>
</dbReference>
<dbReference type="Ensembl" id="ENST00000430267.2">
    <molecule id="Q9HC97-2"/>
    <property type="protein sequence ID" value="ENSP00000411788.2"/>
    <property type="gene ID" value="ENSG00000178623.13"/>
</dbReference>
<dbReference type="Ensembl" id="ENST00000438013.3">
    <molecule id="Q9HC97-1"/>
    <property type="protein sequence ID" value="ENSP00000415890.3"/>
    <property type="gene ID" value="ENSG00000178623.13"/>
</dbReference>
<dbReference type="GeneID" id="2859"/>
<dbReference type="KEGG" id="hsa:2859"/>
<dbReference type="MANE-Select" id="ENST00000407714.2">
    <property type="protein sequence ID" value="ENSP00000384263.1"/>
    <property type="RefSeq nucleotide sequence ID" value="NM_005301.5"/>
    <property type="RefSeq protein sequence ID" value="NP_005292.2"/>
</dbReference>
<dbReference type="UCSC" id="uc002vzs.4">
    <molecule id="Q9HC97-1"/>
    <property type="organism name" value="human"/>
</dbReference>
<dbReference type="AGR" id="HGNC:4492"/>
<dbReference type="CTD" id="2859"/>
<dbReference type="DisGeNET" id="2859"/>
<dbReference type="GeneCards" id="GPR35"/>
<dbReference type="HGNC" id="HGNC:4492">
    <property type="gene designation" value="GPR35"/>
</dbReference>
<dbReference type="HPA" id="ENSG00000178623">
    <property type="expression patterns" value="Tissue enhanced (intestine)"/>
</dbReference>
<dbReference type="MalaCards" id="GPR35"/>
<dbReference type="MIM" id="602646">
    <property type="type" value="gene"/>
</dbReference>
<dbReference type="neXtProt" id="NX_Q9HC97"/>
<dbReference type="OpenTargets" id="ENSG00000178623"/>
<dbReference type="Orphanet" id="171">
    <property type="disease" value="Primary sclerosing cholangitis"/>
</dbReference>
<dbReference type="PharmGKB" id="PA28880"/>
<dbReference type="VEuPathDB" id="HostDB:ENSG00000178623"/>
<dbReference type="eggNOG" id="ENOG502S0QN">
    <property type="taxonomic scope" value="Eukaryota"/>
</dbReference>
<dbReference type="GeneTree" id="ENSGT01040000240444"/>
<dbReference type="HOGENOM" id="CLU_009579_8_2_1"/>
<dbReference type="InParanoid" id="Q9HC97"/>
<dbReference type="OMA" id="YMSISLI"/>
<dbReference type="OrthoDB" id="6086428at2759"/>
<dbReference type="PAN-GO" id="Q9HC97">
    <property type="GO annotations" value="4 GO annotations based on evolutionary models"/>
</dbReference>
<dbReference type="PhylomeDB" id="Q9HC97"/>
<dbReference type="TreeFam" id="TF335578"/>
<dbReference type="PathwayCommons" id="Q9HC97"/>
<dbReference type="Reactome" id="R-HSA-373076">
    <property type="pathway name" value="Class A/1 (Rhodopsin-like receptors)"/>
</dbReference>
<dbReference type="SignaLink" id="Q9HC97"/>
<dbReference type="SIGNOR" id="Q9HC97"/>
<dbReference type="BioGRID-ORCS" id="2859">
    <property type="hits" value="14 hits in 1150 CRISPR screens"/>
</dbReference>
<dbReference type="ChiTaRS" id="GPR35">
    <property type="organism name" value="human"/>
</dbReference>
<dbReference type="GenomeRNAi" id="2859"/>
<dbReference type="Pharos" id="Q9HC97">
    <property type="development level" value="Tchem"/>
</dbReference>
<dbReference type="PRO" id="PR:Q9HC97"/>
<dbReference type="Proteomes" id="UP000005640">
    <property type="component" value="Chromosome 2"/>
</dbReference>
<dbReference type="RNAct" id="Q9HC97">
    <property type="molecule type" value="protein"/>
</dbReference>
<dbReference type="Bgee" id="ENSG00000178623">
    <property type="expression patterns" value="Expressed in mucosa of transverse colon and 109 other cell types or tissues"/>
</dbReference>
<dbReference type="GO" id="GO:0005886">
    <property type="term" value="C:plasma membrane"/>
    <property type="evidence" value="ECO:0000314"/>
    <property type="project" value="UniProtKB"/>
</dbReference>
<dbReference type="GO" id="GO:0016494">
    <property type="term" value="F:C-X-C chemokine receptor activity"/>
    <property type="evidence" value="ECO:0000315"/>
    <property type="project" value="UniProtKB"/>
</dbReference>
<dbReference type="GO" id="GO:0004930">
    <property type="term" value="F:G protein-coupled receptor activity"/>
    <property type="evidence" value="ECO:0000314"/>
    <property type="project" value="UniProtKB"/>
</dbReference>
<dbReference type="GO" id="GO:0070098">
    <property type="term" value="P:chemokine-mediated signaling pathway"/>
    <property type="evidence" value="ECO:0000314"/>
    <property type="project" value="MGI"/>
</dbReference>
<dbReference type="GO" id="GO:0007010">
    <property type="term" value="P:cytoskeleton organization"/>
    <property type="evidence" value="ECO:0007669"/>
    <property type="project" value="Ensembl"/>
</dbReference>
<dbReference type="GO" id="GO:0007186">
    <property type="term" value="P:G protein-coupled receptor signaling pathway"/>
    <property type="evidence" value="ECO:0000314"/>
    <property type="project" value="UniProtKB"/>
</dbReference>
<dbReference type="GO" id="GO:1901386">
    <property type="term" value="P:negative regulation of voltage-gated calcium channel activity"/>
    <property type="evidence" value="ECO:0000315"/>
    <property type="project" value="UniProtKB"/>
</dbReference>
<dbReference type="GO" id="GO:0007204">
    <property type="term" value="P:positive regulation of cytosolic calcium ion concentration"/>
    <property type="evidence" value="ECO:0000315"/>
    <property type="project" value="UniProtKB"/>
</dbReference>
<dbReference type="CDD" id="cd15164">
    <property type="entry name" value="7tmA_GPR35-like"/>
    <property type="match status" value="1"/>
</dbReference>
<dbReference type="FunFam" id="1.20.1070.10:FF:000142">
    <property type="entry name" value="G protein-coupled receptor 55"/>
    <property type="match status" value="1"/>
</dbReference>
<dbReference type="Gene3D" id="1.20.1070.10">
    <property type="entry name" value="Rhodopsin 7-helix transmembrane proteins"/>
    <property type="match status" value="1"/>
</dbReference>
<dbReference type="InterPro" id="IPR000276">
    <property type="entry name" value="GPCR_Rhodpsn"/>
</dbReference>
<dbReference type="InterPro" id="IPR017452">
    <property type="entry name" value="GPCR_Rhodpsn_7TM"/>
</dbReference>
<dbReference type="InterPro" id="IPR044734">
    <property type="entry name" value="GPR35_7tmA"/>
</dbReference>
<dbReference type="PANTHER" id="PTHR24232">
    <property type="entry name" value="G-PROTEIN COUPLED RECEPTOR"/>
    <property type="match status" value="1"/>
</dbReference>
<dbReference type="PANTHER" id="PTHR24232:SF54">
    <property type="entry name" value="G-PROTEIN COUPLED RECEPTOR 35"/>
    <property type="match status" value="1"/>
</dbReference>
<dbReference type="Pfam" id="PF00001">
    <property type="entry name" value="7tm_1"/>
    <property type="match status" value="1"/>
</dbReference>
<dbReference type="PRINTS" id="PR00237">
    <property type="entry name" value="GPCRRHODOPSN"/>
</dbReference>
<dbReference type="SUPFAM" id="SSF81321">
    <property type="entry name" value="Family A G protein-coupled receptor-like"/>
    <property type="match status" value="1"/>
</dbReference>
<dbReference type="PROSITE" id="PS00237">
    <property type="entry name" value="G_PROTEIN_RECEP_F1_1"/>
    <property type="match status" value="1"/>
</dbReference>
<dbReference type="PROSITE" id="PS50262">
    <property type="entry name" value="G_PROTEIN_RECEP_F1_2"/>
    <property type="match status" value="1"/>
</dbReference>
<organism>
    <name type="scientific">Homo sapiens</name>
    <name type="common">Human</name>
    <dbReference type="NCBI Taxonomy" id="9606"/>
    <lineage>
        <taxon>Eukaryota</taxon>
        <taxon>Metazoa</taxon>
        <taxon>Chordata</taxon>
        <taxon>Craniata</taxon>
        <taxon>Vertebrata</taxon>
        <taxon>Euteleostomi</taxon>
        <taxon>Mammalia</taxon>
        <taxon>Eutheria</taxon>
        <taxon>Euarchontoglires</taxon>
        <taxon>Primates</taxon>
        <taxon>Haplorrhini</taxon>
        <taxon>Catarrhini</taxon>
        <taxon>Hominidae</taxon>
        <taxon>Homo</taxon>
    </lineage>
</organism>
<keyword id="KW-0002">3D-structure</keyword>
<keyword id="KW-0025">Alternative splicing</keyword>
<keyword id="KW-1003">Cell membrane</keyword>
<keyword id="KW-1015">Disulfide bond</keyword>
<keyword id="KW-0297">G-protein coupled receptor</keyword>
<keyword id="KW-0325">Glycoprotein</keyword>
<keyword id="KW-0472">Membrane</keyword>
<keyword id="KW-0597">Phosphoprotein</keyword>
<keyword id="KW-1267">Proteomics identification</keyword>
<keyword id="KW-0675">Receptor</keyword>
<keyword id="KW-1185">Reference proteome</keyword>
<keyword id="KW-0807">Transducer</keyword>
<keyword id="KW-0812">Transmembrane</keyword>
<keyword id="KW-1133">Transmembrane helix</keyword>
<gene>
    <name type="primary">GPR35</name>
</gene>
<name>GPR35_HUMAN</name>